<accession>B5FCA6</accession>
<proteinExistence type="inferred from homology"/>
<protein>
    <recommendedName>
        <fullName evidence="1">tRNA/tmRNA (uracil-C(5))-methyltransferase</fullName>
        <ecNumber evidence="1">2.1.1.-</ecNumber>
        <ecNumber evidence="1">2.1.1.35</ecNumber>
    </recommendedName>
    <alternativeName>
        <fullName evidence="1">tRNA (uracil(54)-C(5))-methyltransferase</fullName>
    </alternativeName>
    <alternativeName>
        <fullName evidence="1">tRNA(m5U54)-methyltransferase</fullName>
        <shortName evidence="1">RUMT</shortName>
    </alternativeName>
    <alternativeName>
        <fullName evidence="1">tmRNA (uracil(341)-C(5))-methyltransferase</fullName>
    </alternativeName>
</protein>
<dbReference type="EC" id="2.1.1.-" evidence="1"/>
<dbReference type="EC" id="2.1.1.35" evidence="1"/>
<dbReference type="EMBL" id="CP001139">
    <property type="protein sequence ID" value="ACH67360.1"/>
    <property type="molecule type" value="Genomic_DNA"/>
</dbReference>
<dbReference type="RefSeq" id="WP_005421342.1">
    <property type="nucleotide sequence ID" value="NC_011184.1"/>
</dbReference>
<dbReference type="SMR" id="B5FCA6"/>
<dbReference type="GeneID" id="54165167"/>
<dbReference type="KEGG" id="vfm:VFMJ11_2560"/>
<dbReference type="HOGENOM" id="CLU_043022_0_0_6"/>
<dbReference type="Proteomes" id="UP000001857">
    <property type="component" value="Chromosome I"/>
</dbReference>
<dbReference type="GO" id="GO:0005829">
    <property type="term" value="C:cytosol"/>
    <property type="evidence" value="ECO:0007669"/>
    <property type="project" value="TreeGrafter"/>
</dbReference>
<dbReference type="GO" id="GO:0019843">
    <property type="term" value="F:rRNA binding"/>
    <property type="evidence" value="ECO:0007669"/>
    <property type="project" value="TreeGrafter"/>
</dbReference>
<dbReference type="GO" id="GO:0030697">
    <property type="term" value="F:tRNA (uracil(54)-C5)-methyltransferase activity, S-adenosyl methionine-dependent"/>
    <property type="evidence" value="ECO:0007669"/>
    <property type="project" value="UniProtKB-UniRule"/>
</dbReference>
<dbReference type="GO" id="GO:0000049">
    <property type="term" value="F:tRNA binding"/>
    <property type="evidence" value="ECO:0007669"/>
    <property type="project" value="TreeGrafter"/>
</dbReference>
<dbReference type="GO" id="GO:0030488">
    <property type="term" value="P:tRNA methylation"/>
    <property type="evidence" value="ECO:0007669"/>
    <property type="project" value="UniProtKB-UniRule"/>
</dbReference>
<dbReference type="CDD" id="cd02440">
    <property type="entry name" value="AdoMet_MTases"/>
    <property type="match status" value="1"/>
</dbReference>
<dbReference type="FunFam" id="2.40.50.1070:FF:000001">
    <property type="entry name" value="tRNA/tmRNA (uracil-C(5))-methyltransferase"/>
    <property type="match status" value="1"/>
</dbReference>
<dbReference type="FunFam" id="3.40.50.150:FF:000012">
    <property type="entry name" value="tRNA/tmRNA (uracil-C(5))-methyltransferase"/>
    <property type="match status" value="1"/>
</dbReference>
<dbReference type="Gene3D" id="2.40.50.1070">
    <property type="match status" value="1"/>
</dbReference>
<dbReference type="Gene3D" id="3.40.50.150">
    <property type="entry name" value="Vaccinia Virus protein VP39"/>
    <property type="match status" value="1"/>
</dbReference>
<dbReference type="HAMAP" id="MF_01011">
    <property type="entry name" value="RNA_methyltr_TrmA"/>
    <property type="match status" value="1"/>
</dbReference>
<dbReference type="InterPro" id="IPR030390">
    <property type="entry name" value="MeTrfase_TrmA_AS"/>
</dbReference>
<dbReference type="InterPro" id="IPR030391">
    <property type="entry name" value="MeTrfase_TrmA_CS"/>
</dbReference>
<dbReference type="InterPro" id="IPR029063">
    <property type="entry name" value="SAM-dependent_MTases_sf"/>
</dbReference>
<dbReference type="InterPro" id="IPR011869">
    <property type="entry name" value="TrmA_MeTrfase"/>
</dbReference>
<dbReference type="InterPro" id="IPR010280">
    <property type="entry name" value="U5_MeTrfase_fam"/>
</dbReference>
<dbReference type="NCBIfam" id="TIGR02143">
    <property type="entry name" value="trmA_only"/>
    <property type="match status" value="1"/>
</dbReference>
<dbReference type="PANTHER" id="PTHR47790">
    <property type="entry name" value="TRNA/TMRNA (URACIL-C(5))-METHYLTRANSFERASE"/>
    <property type="match status" value="1"/>
</dbReference>
<dbReference type="PANTHER" id="PTHR47790:SF2">
    <property type="entry name" value="TRNA_TMRNA (URACIL-C(5))-METHYLTRANSFERASE"/>
    <property type="match status" value="1"/>
</dbReference>
<dbReference type="Pfam" id="PF05958">
    <property type="entry name" value="tRNA_U5-meth_tr"/>
    <property type="match status" value="1"/>
</dbReference>
<dbReference type="SUPFAM" id="SSF53335">
    <property type="entry name" value="S-adenosyl-L-methionine-dependent methyltransferases"/>
    <property type="match status" value="1"/>
</dbReference>
<dbReference type="PROSITE" id="PS51687">
    <property type="entry name" value="SAM_MT_RNA_M5U"/>
    <property type="match status" value="1"/>
</dbReference>
<dbReference type="PROSITE" id="PS01230">
    <property type="entry name" value="TRMA_1"/>
    <property type="match status" value="1"/>
</dbReference>
<dbReference type="PROSITE" id="PS01231">
    <property type="entry name" value="TRMA_2"/>
    <property type="match status" value="1"/>
</dbReference>
<feature type="chain" id="PRO_1000198560" description="tRNA/tmRNA (uracil-C(5))-methyltransferase">
    <location>
        <begin position="1"/>
        <end position="368"/>
    </location>
</feature>
<feature type="active site" description="Nucleophile" evidence="1">
    <location>
        <position position="326"/>
    </location>
</feature>
<feature type="active site" description="Proton acceptor" evidence="1">
    <location>
        <position position="360"/>
    </location>
</feature>
<feature type="binding site" evidence="1">
    <location>
        <position position="190"/>
    </location>
    <ligand>
        <name>S-adenosyl-L-methionine</name>
        <dbReference type="ChEBI" id="CHEBI:59789"/>
    </ligand>
</feature>
<feature type="binding site" evidence="1">
    <location>
        <position position="218"/>
    </location>
    <ligand>
        <name>S-adenosyl-L-methionine</name>
        <dbReference type="ChEBI" id="CHEBI:59789"/>
    </ligand>
</feature>
<feature type="binding site" evidence="1">
    <location>
        <position position="223"/>
    </location>
    <ligand>
        <name>S-adenosyl-L-methionine</name>
        <dbReference type="ChEBI" id="CHEBI:59789"/>
    </ligand>
</feature>
<feature type="binding site" evidence="1">
    <location>
        <position position="239"/>
    </location>
    <ligand>
        <name>S-adenosyl-L-methionine</name>
        <dbReference type="ChEBI" id="CHEBI:59789"/>
    </ligand>
</feature>
<feature type="binding site" evidence="1">
    <location>
        <position position="301"/>
    </location>
    <ligand>
        <name>S-adenosyl-L-methionine</name>
        <dbReference type="ChEBI" id="CHEBI:59789"/>
    </ligand>
</feature>
<sequence>MTQSVMNPENYQVQLDEKAEALSAMFSEFNVPELEVFSSPAENYRMRAEFRVWHEGDEMYYVMFNQETKEKYRVDYFLPASRLINDLMPLLTEAVKESKTLRYKMFQVDFLSTLSGEILVSMLYHRQLDDAWKEEAKALKQRLNDEGFNLNIIGRARKMKIVLDQEFVIEKLKVNDDILTYKQVENSFTQPNGIVAQKMLEWAVDCTQNSQGDLLELYCGNGNFSLALAKNFDRVLATELAKPSVDSAQYNIAANNIDNVQIIRMSAEDFTDAMEGKREFRRLKDQNIDLKSYNCNTIFVDPPRSGMDEGTCKMVQGYERIMYISCNPETLKENLEILSQTHNITRFALFDQFPYTHHMEAGVFLERK</sequence>
<comment type="function">
    <text evidence="1">Dual-specificity methyltransferase that catalyzes the formation of 5-methyluridine at position 54 (m5U54) in all tRNAs, and that of position 341 (m5U341) in tmRNA (transfer-mRNA).</text>
</comment>
<comment type="catalytic activity">
    <reaction evidence="1">
        <text>uridine(54) in tRNA + S-adenosyl-L-methionine = 5-methyluridine(54) in tRNA + S-adenosyl-L-homocysteine + H(+)</text>
        <dbReference type="Rhea" id="RHEA:42712"/>
        <dbReference type="Rhea" id="RHEA-COMP:10167"/>
        <dbReference type="Rhea" id="RHEA-COMP:10193"/>
        <dbReference type="ChEBI" id="CHEBI:15378"/>
        <dbReference type="ChEBI" id="CHEBI:57856"/>
        <dbReference type="ChEBI" id="CHEBI:59789"/>
        <dbReference type="ChEBI" id="CHEBI:65315"/>
        <dbReference type="ChEBI" id="CHEBI:74447"/>
        <dbReference type="EC" id="2.1.1.35"/>
    </reaction>
</comment>
<comment type="catalytic activity">
    <reaction evidence="1">
        <text>uridine(341) in tmRNA + S-adenosyl-L-methionine = 5-methyluridine(341) in tmRNA + S-adenosyl-L-homocysteine + H(+)</text>
        <dbReference type="Rhea" id="RHEA:43612"/>
        <dbReference type="Rhea" id="RHEA-COMP:10630"/>
        <dbReference type="Rhea" id="RHEA-COMP:10631"/>
        <dbReference type="ChEBI" id="CHEBI:15378"/>
        <dbReference type="ChEBI" id="CHEBI:57856"/>
        <dbReference type="ChEBI" id="CHEBI:59789"/>
        <dbReference type="ChEBI" id="CHEBI:65315"/>
        <dbReference type="ChEBI" id="CHEBI:74447"/>
    </reaction>
</comment>
<comment type="similarity">
    <text evidence="1">Belongs to the class I-like SAM-binding methyltransferase superfamily. RNA M5U methyltransferase family. TrmA subfamily.</text>
</comment>
<name>TRMA_ALIFM</name>
<keyword id="KW-0489">Methyltransferase</keyword>
<keyword id="KW-0949">S-adenosyl-L-methionine</keyword>
<keyword id="KW-0808">Transferase</keyword>
<keyword id="KW-0819">tRNA processing</keyword>
<organism>
    <name type="scientific">Aliivibrio fischeri (strain MJ11)</name>
    <name type="common">Vibrio fischeri</name>
    <dbReference type="NCBI Taxonomy" id="388396"/>
    <lineage>
        <taxon>Bacteria</taxon>
        <taxon>Pseudomonadati</taxon>
        <taxon>Pseudomonadota</taxon>
        <taxon>Gammaproteobacteria</taxon>
        <taxon>Vibrionales</taxon>
        <taxon>Vibrionaceae</taxon>
        <taxon>Aliivibrio</taxon>
    </lineage>
</organism>
<evidence type="ECO:0000255" key="1">
    <source>
        <dbReference type="HAMAP-Rule" id="MF_01011"/>
    </source>
</evidence>
<gene>
    <name evidence="1" type="primary">trmA</name>
    <name type="ordered locus">VFMJ11_2560</name>
</gene>
<reference key="1">
    <citation type="submission" date="2008-08" db="EMBL/GenBank/DDBJ databases">
        <title>Complete sequence of Vibrio fischeri strain MJ11.</title>
        <authorList>
            <person name="Mandel M.J."/>
            <person name="Stabb E.V."/>
            <person name="Ruby E.G."/>
            <person name="Ferriera S."/>
            <person name="Johnson J."/>
            <person name="Kravitz S."/>
            <person name="Beeson K."/>
            <person name="Sutton G."/>
            <person name="Rogers Y.-H."/>
            <person name="Friedman R."/>
            <person name="Frazier M."/>
            <person name="Venter J.C."/>
        </authorList>
    </citation>
    <scope>NUCLEOTIDE SEQUENCE [LARGE SCALE GENOMIC DNA]</scope>
    <source>
        <strain>MJ11</strain>
    </source>
</reference>